<feature type="chain" id="PRO_1000133658" description="HTH-type transcriptional regulator BetI">
    <location>
        <begin position="1"/>
        <end position="195"/>
    </location>
</feature>
<feature type="domain" description="HTH tetR-type" evidence="2">
    <location>
        <begin position="8"/>
        <end position="68"/>
    </location>
</feature>
<feature type="DNA-binding region" description="H-T-H motif" evidence="2">
    <location>
        <begin position="31"/>
        <end position="50"/>
    </location>
</feature>
<evidence type="ECO:0000250" key="1"/>
<evidence type="ECO:0000255" key="2">
    <source>
        <dbReference type="HAMAP-Rule" id="MF_00768"/>
    </source>
</evidence>
<gene>
    <name evidence="2" type="primary">betI</name>
    <name type="ordered locus">ECS88_0321</name>
</gene>
<name>BETI_ECO45</name>
<proteinExistence type="inferred from homology"/>
<comment type="function">
    <text evidence="1">Repressor involved in the biosynthesis of the osmoprotectant glycine betaine. It represses transcription of the choline transporter BetT and the genes of BetAB involved in the synthesis of glycine betaine (By similarity).</text>
</comment>
<comment type="pathway">
    <text>Amine and polyamine biosynthesis; betaine biosynthesis via choline pathway [regulation].</text>
</comment>
<protein>
    <recommendedName>
        <fullName evidence="2">HTH-type transcriptional regulator BetI</fullName>
    </recommendedName>
</protein>
<dbReference type="EMBL" id="CU928161">
    <property type="protein sequence ID" value="CAR01672.1"/>
    <property type="molecule type" value="Genomic_DNA"/>
</dbReference>
<dbReference type="RefSeq" id="WP_001314510.1">
    <property type="nucleotide sequence ID" value="NC_011742.1"/>
</dbReference>
<dbReference type="SMR" id="B7MCD2"/>
<dbReference type="KEGG" id="ecz:ECS88_0321"/>
<dbReference type="HOGENOM" id="CLU_069356_15_4_6"/>
<dbReference type="UniPathway" id="UPA00529"/>
<dbReference type="Proteomes" id="UP000000747">
    <property type="component" value="Chromosome"/>
</dbReference>
<dbReference type="GO" id="GO:0003700">
    <property type="term" value="F:DNA-binding transcription factor activity"/>
    <property type="evidence" value="ECO:0007669"/>
    <property type="project" value="UniProtKB-UniRule"/>
</dbReference>
<dbReference type="GO" id="GO:0000976">
    <property type="term" value="F:transcription cis-regulatory region binding"/>
    <property type="evidence" value="ECO:0007669"/>
    <property type="project" value="TreeGrafter"/>
</dbReference>
<dbReference type="GO" id="GO:0019285">
    <property type="term" value="P:glycine betaine biosynthetic process from choline"/>
    <property type="evidence" value="ECO:0007669"/>
    <property type="project" value="UniProtKB-UniRule"/>
</dbReference>
<dbReference type="GO" id="GO:0045892">
    <property type="term" value="P:negative regulation of DNA-templated transcription"/>
    <property type="evidence" value="ECO:0007669"/>
    <property type="project" value="UniProtKB-UniRule"/>
</dbReference>
<dbReference type="FunFam" id="1.10.357.10:FF:000009">
    <property type="entry name" value="HTH-type transcriptional regulator BetI"/>
    <property type="match status" value="1"/>
</dbReference>
<dbReference type="Gene3D" id="1.10.357.10">
    <property type="entry name" value="Tetracycline Repressor, domain 2"/>
    <property type="match status" value="1"/>
</dbReference>
<dbReference type="HAMAP" id="MF_00768">
    <property type="entry name" value="HTH_type_BetI"/>
    <property type="match status" value="1"/>
</dbReference>
<dbReference type="InterPro" id="IPR039538">
    <property type="entry name" value="BetI_C"/>
</dbReference>
<dbReference type="InterPro" id="IPR023772">
    <property type="entry name" value="DNA-bd_HTH_TetR-type_CS"/>
</dbReference>
<dbReference type="InterPro" id="IPR009057">
    <property type="entry name" value="Homeodomain-like_sf"/>
</dbReference>
<dbReference type="InterPro" id="IPR050109">
    <property type="entry name" value="HTH-type_TetR-like_transc_reg"/>
</dbReference>
<dbReference type="InterPro" id="IPR001647">
    <property type="entry name" value="HTH_TetR"/>
</dbReference>
<dbReference type="InterPro" id="IPR036271">
    <property type="entry name" value="Tet_transcr_reg_TetR-rel_C_sf"/>
</dbReference>
<dbReference type="InterPro" id="IPR017757">
    <property type="entry name" value="Tscrpt_rep_BetI"/>
</dbReference>
<dbReference type="NCBIfam" id="TIGR03384">
    <property type="entry name" value="betaine_BetI"/>
    <property type="match status" value="1"/>
</dbReference>
<dbReference type="NCBIfam" id="NF001978">
    <property type="entry name" value="PRK00767.1"/>
    <property type="match status" value="1"/>
</dbReference>
<dbReference type="PANTHER" id="PTHR30055:SF234">
    <property type="entry name" value="HTH-TYPE TRANSCRIPTIONAL REGULATOR BETI"/>
    <property type="match status" value="1"/>
</dbReference>
<dbReference type="PANTHER" id="PTHR30055">
    <property type="entry name" value="HTH-TYPE TRANSCRIPTIONAL REGULATOR RUTR"/>
    <property type="match status" value="1"/>
</dbReference>
<dbReference type="Pfam" id="PF13977">
    <property type="entry name" value="TetR_C_6"/>
    <property type="match status" value="1"/>
</dbReference>
<dbReference type="Pfam" id="PF00440">
    <property type="entry name" value="TetR_N"/>
    <property type="match status" value="1"/>
</dbReference>
<dbReference type="PRINTS" id="PR00455">
    <property type="entry name" value="HTHTETR"/>
</dbReference>
<dbReference type="SUPFAM" id="SSF46689">
    <property type="entry name" value="Homeodomain-like"/>
    <property type="match status" value="1"/>
</dbReference>
<dbReference type="SUPFAM" id="SSF48498">
    <property type="entry name" value="Tetracyclin repressor-like, C-terminal domain"/>
    <property type="match status" value="1"/>
</dbReference>
<dbReference type="PROSITE" id="PS01081">
    <property type="entry name" value="HTH_TETR_1"/>
    <property type="match status" value="1"/>
</dbReference>
<dbReference type="PROSITE" id="PS50977">
    <property type="entry name" value="HTH_TETR_2"/>
    <property type="match status" value="1"/>
</dbReference>
<sequence length="195" mass="21749">MPKLGMQSIRRRQLIDATLEAINEVGMHDATIAQIARRAGVSTGIISHYFRDKNGLLEATMRDITSQLRDAVLNRLHALPQGSAELRLQAIVGGNFDETQVSSAAMKAWLAFWASSMHQPMLYRLQQVSSRRLLSNLVSEFRRELPRQQAQEAGYGLAALIDGLWLRAALSGKALDKPLAHSLTRHFITQHLPTD</sequence>
<keyword id="KW-0238">DNA-binding</keyword>
<keyword id="KW-1185">Reference proteome</keyword>
<keyword id="KW-0678">Repressor</keyword>
<keyword id="KW-0804">Transcription</keyword>
<keyword id="KW-0805">Transcription regulation</keyword>
<reference key="1">
    <citation type="journal article" date="2009" name="PLoS Genet.">
        <title>Organised genome dynamics in the Escherichia coli species results in highly diverse adaptive paths.</title>
        <authorList>
            <person name="Touchon M."/>
            <person name="Hoede C."/>
            <person name="Tenaillon O."/>
            <person name="Barbe V."/>
            <person name="Baeriswyl S."/>
            <person name="Bidet P."/>
            <person name="Bingen E."/>
            <person name="Bonacorsi S."/>
            <person name="Bouchier C."/>
            <person name="Bouvet O."/>
            <person name="Calteau A."/>
            <person name="Chiapello H."/>
            <person name="Clermont O."/>
            <person name="Cruveiller S."/>
            <person name="Danchin A."/>
            <person name="Diard M."/>
            <person name="Dossat C."/>
            <person name="Karoui M.E."/>
            <person name="Frapy E."/>
            <person name="Garry L."/>
            <person name="Ghigo J.M."/>
            <person name="Gilles A.M."/>
            <person name="Johnson J."/>
            <person name="Le Bouguenec C."/>
            <person name="Lescat M."/>
            <person name="Mangenot S."/>
            <person name="Martinez-Jehanne V."/>
            <person name="Matic I."/>
            <person name="Nassif X."/>
            <person name="Oztas S."/>
            <person name="Petit M.A."/>
            <person name="Pichon C."/>
            <person name="Rouy Z."/>
            <person name="Ruf C.S."/>
            <person name="Schneider D."/>
            <person name="Tourret J."/>
            <person name="Vacherie B."/>
            <person name="Vallenet D."/>
            <person name="Medigue C."/>
            <person name="Rocha E.P.C."/>
            <person name="Denamur E."/>
        </authorList>
    </citation>
    <scope>NUCLEOTIDE SEQUENCE [LARGE SCALE GENOMIC DNA]</scope>
    <source>
        <strain>S88 / ExPEC</strain>
    </source>
</reference>
<accession>B7MCD2</accession>
<organism>
    <name type="scientific">Escherichia coli O45:K1 (strain S88 / ExPEC)</name>
    <dbReference type="NCBI Taxonomy" id="585035"/>
    <lineage>
        <taxon>Bacteria</taxon>
        <taxon>Pseudomonadati</taxon>
        <taxon>Pseudomonadota</taxon>
        <taxon>Gammaproteobacteria</taxon>
        <taxon>Enterobacterales</taxon>
        <taxon>Enterobacteriaceae</taxon>
        <taxon>Escherichia</taxon>
    </lineage>
</organism>